<dbReference type="EMBL" id="AJ315643">
    <property type="protein sequence ID" value="CAC51117.1"/>
    <property type="status" value="ALT_INIT"/>
    <property type="molecule type" value="mRNA"/>
</dbReference>
<dbReference type="RefSeq" id="NP_598295.2">
    <property type="nucleotide sequence ID" value="NM_133611.2"/>
</dbReference>
<dbReference type="SMR" id="Q921A2"/>
<dbReference type="FunCoup" id="Q921A2">
    <property type="interactions" value="1381"/>
</dbReference>
<dbReference type="STRING" id="10116.ENSRNOP00000021153"/>
<dbReference type="GlyCosmos" id="Q921A2">
    <property type="glycosylation" value="3 sites, No reported glycans"/>
</dbReference>
<dbReference type="GlyGen" id="Q921A2">
    <property type="glycosylation" value="3 sites"/>
</dbReference>
<dbReference type="iPTMnet" id="Q921A2"/>
<dbReference type="PhosphoSitePlus" id="Q921A2"/>
<dbReference type="SwissPalm" id="Q921A2"/>
<dbReference type="PaxDb" id="10116-ENSRNOP00000021153"/>
<dbReference type="Ensembl" id="ENSRNOT00000021153.4">
    <property type="protein sequence ID" value="ENSRNOP00000021153.2"/>
    <property type="gene ID" value="ENSRNOG00000015741.4"/>
</dbReference>
<dbReference type="GeneID" id="171147"/>
<dbReference type="KEGG" id="rno:171147"/>
<dbReference type="AGR" id="RGD:621814"/>
<dbReference type="CTD" id="114134"/>
<dbReference type="RGD" id="621814">
    <property type="gene designation" value="Slc2a13"/>
</dbReference>
<dbReference type="eggNOG" id="KOG0254">
    <property type="taxonomic scope" value="Eukaryota"/>
</dbReference>
<dbReference type="GeneTree" id="ENSGT00940000155870"/>
<dbReference type="HOGENOM" id="CLU_001265_30_5_1"/>
<dbReference type="InParanoid" id="Q921A2"/>
<dbReference type="OMA" id="ETGWRWM"/>
<dbReference type="OrthoDB" id="6339427at2759"/>
<dbReference type="PhylomeDB" id="Q921A2"/>
<dbReference type="TreeFam" id="TF314916"/>
<dbReference type="Reactome" id="R-RNO-429593">
    <property type="pathway name" value="Inositol transporters"/>
</dbReference>
<dbReference type="PRO" id="PR:Q921A2"/>
<dbReference type="Proteomes" id="UP000002494">
    <property type="component" value="Chromosome 7"/>
</dbReference>
<dbReference type="Bgee" id="ENSRNOG00000015741">
    <property type="expression patterns" value="Expressed in Ammon's horn and 16 other cell types or tissues"/>
</dbReference>
<dbReference type="GO" id="GO:0016324">
    <property type="term" value="C:apical plasma membrane"/>
    <property type="evidence" value="ECO:0000318"/>
    <property type="project" value="GO_Central"/>
</dbReference>
<dbReference type="GO" id="GO:0097450">
    <property type="term" value="C:astrocyte end-foot"/>
    <property type="evidence" value="ECO:0000314"/>
    <property type="project" value="ARUK-UCL"/>
</dbReference>
<dbReference type="GO" id="GO:0044297">
    <property type="term" value="C:cell body"/>
    <property type="evidence" value="ECO:0000314"/>
    <property type="project" value="ARUK-UCL"/>
</dbReference>
<dbReference type="GO" id="GO:0071944">
    <property type="term" value="C:cell periphery"/>
    <property type="evidence" value="ECO:0000314"/>
    <property type="project" value="ARUK-UCL"/>
</dbReference>
<dbReference type="GO" id="GO:0042995">
    <property type="term" value="C:cell projection"/>
    <property type="evidence" value="ECO:0000314"/>
    <property type="project" value="ARUK-UCL"/>
</dbReference>
<dbReference type="GO" id="GO:0005737">
    <property type="term" value="C:cytoplasm"/>
    <property type="evidence" value="ECO:0000314"/>
    <property type="project" value="ARUK-UCL"/>
</dbReference>
<dbReference type="GO" id="GO:0030426">
    <property type="term" value="C:growth cone"/>
    <property type="evidence" value="ECO:0000314"/>
    <property type="project" value="ARUK-UCL"/>
</dbReference>
<dbReference type="GO" id="GO:0043231">
    <property type="term" value="C:intracellular membrane-bounded organelle"/>
    <property type="evidence" value="ECO:0000314"/>
    <property type="project" value="ARUK-UCL"/>
</dbReference>
<dbReference type="GO" id="GO:0016020">
    <property type="term" value="C:membrane"/>
    <property type="evidence" value="ECO:0000314"/>
    <property type="project" value="ARUK-UCL"/>
</dbReference>
<dbReference type="GO" id="GO:0031090">
    <property type="term" value="C:organelle membrane"/>
    <property type="evidence" value="ECO:0000266"/>
    <property type="project" value="RGD"/>
</dbReference>
<dbReference type="GO" id="GO:0005886">
    <property type="term" value="C:plasma membrane"/>
    <property type="evidence" value="ECO:0000266"/>
    <property type="project" value="RGD"/>
</dbReference>
<dbReference type="GO" id="GO:0051117">
    <property type="term" value="F:ATPase binding"/>
    <property type="evidence" value="ECO:0000266"/>
    <property type="project" value="RGD"/>
</dbReference>
<dbReference type="GO" id="GO:0005365">
    <property type="term" value="F:myo-inositol transmembrane transporter activity"/>
    <property type="evidence" value="ECO:0000314"/>
    <property type="project" value="ARUK-UCL"/>
</dbReference>
<dbReference type="GO" id="GO:0005366">
    <property type="term" value="F:myo-inositol:proton symporter activity"/>
    <property type="evidence" value="ECO:0000266"/>
    <property type="project" value="RGD"/>
</dbReference>
<dbReference type="GO" id="GO:0002020">
    <property type="term" value="F:protease binding"/>
    <property type="evidence" value="ECO:0000266"/>
    <property type="project" value="RGD"/>
</dbReference>
<dbReference type="GO" id="GO:0015798">
    <property type="term" value="P:myo-inositol transport"/>
    <property type="evidence" value="ECO:0000314"/>
    <property type="project" value="ARUK-UCL"/>
</dbReference>
<dbReference type="GO" id="GO:1902004">
    <property type="term" value="P:positive regulation of amyloid-beta formation"/>
    <property type="evidence" value="ECO:0000266"/>
    <property type="project" value="RGD"/>
</dbReference>
<dbReference type="GO" id="GO:0055085">
    <property type="term" value="P:transmembrane transport"/>
    <property type="evidence" value="ECO:0000318"/>
    <property type="project" value="GO_Central"/>
</dbReference>
<dbReference type="CDD" id="cd17360">
    <property type="entry name" value="MFS_HMIT_like"/>
    <property type="match status" value="1"/>
</dbReference>
<dbReference type="FunFam" id="1.20.1250.20:FF:000105">
    <property type="entry name" value="proton myo-inositol cotransporter isoform X1"/>
    <property type="match status" value="1"/>
</dbReference>
<dbReference type="FunFam" id="1.20.1250.20:FF:000177">
    <property type="entry name" value="proton myo-inositol cotransporter isoform X1"/>
    <property type="match status" value="1"/>
</dbReference>
<dbReference type="Gene3D" id="1.20.1250.20">
    <property type="entry name" value="MFS general substrate transporter like domains"/>
    <property type="match status" value="2"/>
</dbReference>
<dbReference type="InterPro" id="IPR020846">
    <property type="entry name" value="MFS_dom"/>
</dbReference>
<dbReference type="InterPro" id="IPR005828">
    <property type="entry name" value="MFS_sugar_transport-like"/>
</dbReference>
<dbReference type="InterPro" id="IPR036259">
    <property type="entry name" value="MFS_trans_sf"/>
</dbReference>
<dbReference type="InterPro" id="IPR050814">
    <property type="entry name" value="Myo-inositol_Transporter"/>
</dbReference>
<dbReference type="InterPro" id="IPR003663">
    <property type="entry name" value="Sugar/inositol_transpt"/>
</dbReference>
<dbReference type="InterPro" id="IPR005829">
    <property type="entry name" value="Sugar_transporter_CS"/>
</dbReference>
<dbReference type="NCBIfam" id="TIGR00879">
    <property type="entry name" value="SP"/>
    <property type="match status" value="1"/>
</dbReference>
<dbReference type="PANTHER" id="PTHR48020">
    <property type="entry name" value="PROTON MYO-INOSITOL COTRANSPORTER"/>
    <property type="match status" value="1"/>
</dbReference>
<dbReference type="PANTHER" id="PTHR48020:SF12">
    <property type="entry name" value="PROTON MYO-INOSITOL COTRANSPORTER"/>
    <property type="match status" value="1"/>
</dbReference>
<dbReference type="Pfam" id="PF00083">
    <property type="entry name" value="Sugar_tr"/>
    <property type="match status" value="2"/>
</dbReference>
<dbReference type="PRINTS" id="PR00171">
    <property type="entry name" value="SUGRTRNSPORT"/>
</dbReference>
<dbReference type="SUPFAM" id="SSF103473">
    <property type="entry name" value="MFS general substrate transporter"/>
    <property type="match status" value="2"/>
</dbReference>
<dbReference type="PROSITE" id="PS50850">
    <property type="entry name" value="MFS"/>
    <property type="match status" value="1"/>
</dbReference>
<dbReference type="PROSITE" id="PS00216">
    <property type="entry name" value="SUGAR_TRANSPORT_1"/>
    <property type="match status" value="1"/>
</dbReference>
<dbReference type="PROSITE" id="PS00217">
    <property type="entry name" value="SUGAR_TRANSPORT_2"/>
    <property type="match status" value="1"/>
</dbReference>
<feature type="chain" id="PRO_0000050457" description="Proton myo-inositol cotransporter">
    <location>
        <begin position="1"/>
        <end position="637"/>
    </location>
</feature>
<feature type="topological domain" description="Cytoplasmic" evidence="3">
    <location>
        <begin position="1"/>
        <end position="65"/>
    </location>
</feature>
<feature type="transmembrane region" description="Helical; Name=1" evidence="3">
    <location>
        <begin position="66"/>
        <end position="86"/>
    </location>
</feature>
<feature type="topological domain" description="Extracellular" evidence="3">
    <location>
        <begin position="87"/>
        <end position="114"/>
    </location>
</feature>
<feature type="transmembrane region" description="Helical; Name=2" evidence="3">
    <location>
        <begin position="115"/>
        <end position="135"/>
    </location>
</feature>
<feature type="topological domain" description="Cytoplasmic" evidence="3">
    <location>
        <begin position="136"/>
        <end position="137"/>
    </location>
</feature>
<feature type="transmembrane region" description="Helical; Name=3" evidence="3">
    <location>
        <begin position="138"/>
        <end position="158"/>
    </location>
</feature>
<feature type="topological domain" description="Extracellular" evidence="3">
    <location>
        <begin position="159"/>
        <end position="167"/>
    </location>
</feature>
<feature type="transmembrane region" description="Helical; Name=4" evidence="3">
    <location>
        <begin position="168"/>
        <end position="188"/>
    </location>
</feature>
<feature type="topological domain" description="Cytoplasmic" evidence="3">
    <location>
        <begin position="189"/>
        <end position="201"/>
    </location>
</feature>
<feature type="transmembrane region" description="Helical; Name=5" evidence="3">
    <location>
        <begin position="202"/>
        <end position="222"/>
    </location>
</feature>
<feature type="topological domain" description="Extracellular" evidence="3">
    <location>
        <begin position="223"/>
        <end position="228"/>
    </location>
</feature>
<feature type="transmembrane region" description="Helical; Name=6" evidence="3">
    <location>
        <begin position="229"/>
        <end position="249"/>
    </location>
</feature>
<feature type="topological domain" description="Cytoplasmic" evidence="3">
    <location>
        <begin position="250"/>
        <end position="313"/>
    </location>
</feature>
<feature type="transmembrane region" description="Helical; Name=7" evidence="3">
    <location>
        <begin position="314"/>
        <end position="334"/>
    </location>
</feature>
<feature type="topological domain" description="Extracellular" evidence="3">
    <location>
        <begin position="335"/>
        <end position="352"/>
    </location>
</feature>
<feature type="transmembrane region" description="Helical; Name=8" evidence="3">
    <location>
        <begin position="353"/>
        <end position="373"/>
    </location>
</feature>
<feature type="topological domain" description="Cytoplasmic" evidence="3">
    <location>
        <begin position="374"/>
        <end position="382"/>
    </location>
</feature>
<feature type="transmembrane region" description="Helical; Name=9" evidence="3">
    <location>
        <begin position="383"/>
        <end position="403"/>
    </location>
</feature>
<feature type="topological domain" description="Extracellular" evidence="3">
    <location>
        <begin position="404"/>
        <end position="497"/>
    </location>
</feature>
<feature type="transmembrane region" description="Helical; Name=10" evidence="3">
    <location>
        <begin position="498"/>
        <end position="518"/>
    </location>
</feature>
<feature type="topological domain" description="Cytoplasmic" evidence="3">
    <location>
        <begin position="519"/>
        <end position="538"/>
    </location>
</feature>
<feature type="transmembrane region" description="Helical; Name=11" evidence="3">
    <location>
        <begin position="539"/>
        <end position="559"/>
    </location>
</feature>
<feature type="topological domain" description="Extracellular" evidence="3">
    <location>
        <begin position="560"/>
        <end position="562"/>
    </location>
</feature>
<feature type="transmembrane region" description="Helical; Name=12" evidence="3">
    <location>
        <begin position="563"/>
        <end position="583"/>
    </location>
</feature>
<feature type="topological domain" description="Cytoplasmic" evidence="3">
    <location>
        <begin position="584"/>
        <end position="637"/>
    </location>
</feature>
<feature type="region of interest" description="Disordered" evidence="4">
    <location>
        <begin position="16"/>
        <end position="38"/>
    </location>
</feature>
<feature type="modified residue" description="Phosphoserine" evidence="1">
    <location>
        <position position="6"/>
    </location>
</feature>
<feature type="modified residue" description="Phosphoserine" evidence="9">
    <location>
        <position position="44"/>
    </location>
</feature>
<feature type="modified residue" description="Phosphoserine" evidence="9">
    <location>
        <position position="47"/>
    </location>
</feature>
<feature type="modified residue" description="Phosphoserine" evidence="9">
    <location>
        <position position="629"/>
    </location>
</feature>
<feature type="modified residue" description="Phosphoserine" evidence="9">
    <location>
        <position position="634"/>
    </location>
</feature>
<feature type="glycosylation site" description="N-linked (GlcNAc...) asparagine" evidence="3">
    <location>
        <position position="422"/>
    </location>
</feature>
<feature type="glycosylation site" description="N-linked (GlcNAc...) asparagine" evidence="3">
    <location>
        <position position="447"/>
    </location>
</feature>
<feature type="glycosylation site" description="N-linked (GlcNAc...) asparagine" evidence="3">
    <location>
        <position position="474"/>
    </location>
</feature>
<organism>
    <name type="scientific">Rattus norvegicus</name>
    <name type="common">Rat</name>
    <dbReference type="NCBI Taxonomy" id="10116"/>
    <lineage>
        <taxon>Eukaryota</taxon>
        <taxon>Metazoa</taxon>
        <taxon>Chordata</taxon>
        <taxon>Craniata</taxon>
        <taxon>Vertebrata</taxon>
        <taxon>Euteleostomi</taxon>
        <taxon>Mammalia</taxon>
        <taxon>Eutheria</taxon>
        <taxon>Euarchontoglires</taxon>
        <taxon>Glires</taxon>
        <taxon>Rodentia</taxon>
        <taxon>Myomorpha</taxon>
        <taxon>Muroidea</taxon>
        <taxon>Muridae</taxon>
        <taxon>Murinae</taxon>
        <taxon>Rattus</taxon>
    </lineage>
</organism>
<reference key="1">
    <citation type="journal article" date="2001" name="EMBO J.">
        <title>Identification of a mammalian H(+)-myo-inositol symporter expressed predominantly in the brain.</title>
        <authorList>
            <person name="Uldry M."/>
            <person name="Ibberson M."/>
            <person name="Horisberger J.-D."/>
            <person name="Chatton J.-Y."/>
            <person name="Riederer B.M."/>
            <person name="Thorens B."/>
        </authorList>
    </citation>
    <scope>NUCLEOTIDE SEQUENCE [MRNA]</scope>
    <scope>FUNCTION</scope>
    <scope>SUBCELLULAR LOCATION</scope>
</reference>
<reference key="2">
    <citation type="journal article" date="2012" name="Nat. Commun.">
        <title>Quantitative maps of protein phosphorylation sites across 14 different rat organs and tissues.</title>
        <authorList>
            <person name="Lundby A."/>
            <person name="Secher A."/>
            <person name="Lage K."/>
            <person name="Nordsborg N.B."/>
            <person name="Dmytriyev A."/>
            <person name="Lundby C."/>
            <person name="Olsen J.V."/>
        </authorList>
    </citation>
    <scope>PHOSPHORYLATION [LARGE SCALE ANALYSIS] AT SER-44; SER-47; SER-629 AND SER-634</scope>
    <scope>IDENTIFICATION BY MASS SPECTROMETRY [LARGE SCALE ANALYSIS]</scope>
</reference>
<evidence type="ECO:0000250" key="1">
    <source>
        <dbReference type="UniProtKB" id="Q3UHK1"/>
    </source>
</evidence>
<evidence type="ECO:0000250" key="2">
    <source>
        <dbReference type="UniProtKB" id="Q96QE2"/>
    </source>
</evidence>
<evidence type="ECO:0000255" key="3"/>
<evidence type="ECO:0000256" key="4">
    <source>
        <dbReference type="SAM" id="MobiDB-lite"/>
    </source>
</evidence>
<evidence type="ECO:0000269" key="5">
    <source>
    </source>
</evidence>
<evidence type="ECO:0000303" key="6">
    <source>
    </source>
</evidence>
<evidence type="ECO:0000305" key="7"/>
<evidence type="ECO:0000312" key="8">
    <source>
        <dbReference type="RGD" id="621814"/>
    </source>
</evidence>
<evidence type="ECO:0007744" key="9">
    <source>
    </source>
</evidence>
<name>MYCT_RAT</name>
<proteinExistence type="evidence at protein level"/>
<gene>
    <name evidence="8" type="primary">Slc2a13</name>
</gene>
<keyword id="KW-1003">Cell membrane</keyword>
<keyword id="KW-0325">Glycoprotein</keyword>
<keyword id="KW-0472">Membrane</keyword>
<keyword id="KW-0597">Phosphoprotein</keyword>
<keyword id="KW-1185">Reference proteome</keyword>
<keyword id="KW-0812">Transmembrane</keyword>
<keyword id="KW-1133">Transmembrane helix</keyword>
<keyword id="KW-0813">Transport</keyword>
<accession>Q921A2</accession>
<protein>
    <recommendedName>
        <fullName evidence="7">Proton myo-inositol cotransporter</fullName>
        <shortName evidence="6">H(+)-myo-inositol cotransporter</shortName>
        <shortName evidence="6">Hmit</shortName>
    </recommendedName>
    <alternativeName>
        <fullName evidence="6">H(+)-myo-inositol symporter</fullName>
    </alternativeName>
    <alternativeName>
        <fullName>Solute carrier family 2 member 13</fullName>
    </alternativeName>
</protein>
<comment type="function">
    <text evidence="5">H(+)-myo-inositol cotransporter (PubMed:11500374). Can also transport related stereoisomers (PubMed:11500374).</text>
</comment>
<comment type="catalytic activity">
    <reaction evidence="2">
        <text>myo-inositol(out) + H(+)(out) = myo-inositol(in) + H(+)(in)</text>
        <dbReference type="Rhea" id="RHEA:60364"/>
        <dbReference type="ChEBI" id="CHEBI:15378"/>
        <dbReference type="ChEBI" id="CHEBI:17268"/>
    </reaction>
</comment>
<comment type="subcellular location">
    <subcellularLocation>
        <location evidence="5">Cell membrane</location>
        <topology evidence="5">Multi-pass membrane protein</topology>
    </subcellularLocation>
</comment>
<comment type="similarity">
    <text evidence="7">Belongs to the major facilitator superfamily. Sugar transporter (TC 2.A.1.1) family.</text>
</comment>
<comment type="sequence caution" evidence="7">
    <conflict type="erroneous initiation">
        <sequence resource="EMBL-CDS" id="CAC51117"/>
    </conflict>
    <text>Truncated N-terminus.</text>
</comment>
<sequence>MSRKASEDVEYTLRSLSSLMGERRRRQPEPGAPGGERSLLAAESAASLQGAELERAARRQFQRDETPAFVYAAAAFSALGGFLFGYDTGVVSGAMLLLRRQMRLGAMWQELLVSGAVGAAAVAALAGGALNGALGRRSAILLASALCTVGSAVLAAAANKETLLAGRLVVGLGIGIASMTVPVYIAEVSPPNLRGRLVTINTLFITGGQFFASVVDGAFSYLQKDGWRYMLGLAAIPAVIQFLGFLFLPESPRWLIQKGQTQKARRILSQMRGNQTIDEEYDSIRNSIEEEEKEASAAGPIICRMLSYPPTRRALAVGCGLQMFQQLSGINTIMYYSATILQMSGVEDDRLAIWLASITAFTNFIFTLVGVWLVEKVGRRKLTFGSLAGTTVALTILALGFLLSAQVSPRVTFRPTAPSGQNATCTEYSYCNECMLDPDCGFCYKINSSAVIDSSCVPVNKASTNEAAWGRCENETKFKAEDVHWAYSFCPTPYSWTALVGLVLYLVFFAPGMGPMPWTVNSEIYPLWARSTGNACSAGINWIFNVLVSLTFLHTAEYLTYYGAFFLYAGFAAVGLLFVYGCLPETKGKKLEEIESLFDHRLCTCGTADSDEGRYIEYIRVKGSNYHLSDNDASDVE</sequence>